<reference key="1">
    <citation type="journal article" date="1995" name="Proc. Natl. Acad. Sci. U.S.A.">
        <title>The nucleotide sequence of chromosome I from Saccharomyces cerevisiae.</title>
        <authorList>
            <person name="Bussey H."/>
            <person name="Kaback D.B."/>
            <person name="Zhong W.-W."/>
            <person name="Vo D.H."/>
            <person name="Clark M.W."/>
            <person name="Fortin N."/>
            <person name="Hall J."/>
            <person name="Ouellette B.F.F."/>
            <person name="Keng T."/>
            <person name="Barton A.B."/>
            <person name="Su Y."/>
            <person name="Davies C.J."/>
            <person name="Storms R.K."/>
        </authorList>
    </citation>
    <scope>NUCLEOTIDE SEQUENCE [LARGE SCALE GENOMIC DNA]</scope>
    <source>
        <strain>ATCC 204508 / S288c</strain>
    </source>
</reference>
<reference key="2">
    <citation type="journal article" date="2014" name="G3 (Bethesda)">
        <title>The reference genome sequence of Saccharomyces cerevisiae: Then and now.</title>
        <authorList>
            <person name="Engel S.R."/>
            <person name="Dietrich F.S."/>
            <person name="Fisk D.G."/>
            <person name="Binkley G."/>
            <person name="Balakrishnan R."/>
            <person name="Costanzo M.C."/>
            <person name="Dwight S.S."/>
            <person name="Hitz B.C."/>
            <person name="Karra K."/>
            <person name="Nash R.S."/>
            <person name="Weng S."/>
            <person name="Wong E.D."/>
            <person name="Lloyd P."/>
            <person name="Skrzypek M.S."/>
            <person name="Miyasato S.R."/>
            <person name="Simison M."/>
            <person name="Cherry J.M."/>
        </authorList>
    </citation>
    <scope>GENOME REANNOTATION</scope>
    <source>
        <strain>ATCC 204508 / S288c</strain>
    </source>
</reference>
<feature type="chain" id="PRO_0000430971" description="Putative uncharacterized membrane protein YAL026C-A">
    <location>
        <begin position="1"/>
        <end position="145"/>
    </location>
</feature>
<feature type="transmembrane region" description="Helical" evidence="1">
    <location>
        <begin position="104"/>
        <end position="124"/>
    </location>
</feature>
<keyword id="KW-0472">Membrane</keyword>
<keyword id="KW-0812">Transmembrane</keyword>
<keyword id="KW-1133">Transmembrane helix</keyword>
<accession>A0A023PXH4</accession>
<protein>
    <recommendedName>
        <fullName evidence="2">Putative uncharacterized membrane protein YAL026C-A</fullName>
    </recommendedName>
</protein>
<proteinExistence type="uncertain"/>
<gene>
    <name evidence="4" type="ordered locus">YAL026C-A</name>
</gene>
<comment type="subcellular location">
    <subcellularLocation>
        <location evidence="1">Membrane</location>
        <topology evidence="1">Single-pass membrane protein</topology>
    </subcellularLocation>
</comment>
<comment type="miscellaneous">
    <text evidence="2">Partially overlaps DRS2 and YAL027W.</text>
</comment>
<comment type="caution">
    <text evidence="3">Product of a dubious gene prediction unlikely to encode a functional protein. Because of that it is not part of the S.cerevisiae S288c complete/reference proteome set.</text>
</comment>
<sequence length="145" mass="17438">MILLKREVSTVNYKMLRRTPLMTIMDWEVTTLKVQNRSLKIHLLMVIKIQIDSVLREMIFHLIYEAQKQRAEDKKYKNKNKIKRKVIITITEICTFTIKYIRYIEVIILSHHFVIGFSFLLGLLRLGTYLMSSRPMQHMYINNFT</sequence>
<dbReference type="EMBL" id="KJ412207">
    <property type="protein sequence ID" value="AHX39250.1"/>
    <property type="molecule type" value="Genomic_DNA"/>
</dbReference>
<dbReference type="SMR" id="A0A023PXH4"/>
<dbReference type="PaxDb" id="4932-YAL026C-A"/>
<dbReference type="EnsemblFungi" id="YAL026C-A_mRNA">
    <property type="protein sequence ID" value="YAL026C-A"/>
    <property type="gene ID" value="YAL026C-A"/>
</dbReference>
<dbReference type="AGR" id="SGD:S000028730"/>
<dbReference type="SGD" id="S000028730">
    <property type="gene designation" value="YAL026C-A"/>
</dbReference>
<dbReference type="HOGENOM" id="CLU_1787923_0_0_1"/>
<dbReference type="GO" id="GO:0016020">
    <property type="term" value="C:membrane"/>
    <property type="evidence" value="ECO:0007669"/>
    <property type="project" value="UniProtKB-SubCell"/>
</dbReference>
<evidence type="ECO:0000255" key="1"/>
<evidence type="ECO:0000305" key="2"/>
<evidence type="ECO:0000305" key="3">
    <source>
    </source>
</evidence>
<evidence type="ECO:0000312" key="4">
    <source>
        <dbReference type="SGD" id="S000028730"/>
    </source>
</evidence>
<organism>
    <name type="scientific">Saccharomyces cerevisiae (strain ATCC 204508 / S288c)</name>
    <name type="common">Baker's yeast</name>
    <dbReference type="NCBI Taxonomy" id="559292"/>
    <lineage>
        <taxon>Eukaryota</taxon>
        <taxon>Fungi</taxon>
        <taxon>Dikarya</taxon>
        <taxon>Ascomycota</taxon>
        <taxon>Saccharomycotina</taxon>
        <taxon>Saccharomycetes</taxon>
        <taxon>Saccharomycetales</taxon>
        <taxon>Saccharomycetaceae</taxon>
        <taxon>Saccharomyces</taxon>
    </lineage>
</organism>
<name>YA026_YEAST</name>